<reference key="1">
    <citation type="journal article" date="2011" name="J. Bacteriol.">
        <title>Genome of Ochrobactrum anthropi ATCC 49188 T, a versatile opportunistic pathogen and symbiont of several eukaryotic hosts.</title>
        <authorList>
            <person name="Chain P.S."/>
            <person name="Lang D.M."/>
            <person name="Comerci D.J."/>
            <person name="Malfatti S.A."/>
            <person name="Vergez L.M."/>
            <person name="Shin M."/>
            <person name="Ugalde R.A."/>
            <person name="Garcia E."/>
            <person name="Tolmasky M.E."/>
        </authorList>
    </citation>
    <scope>NUCLEOTIDE SEQUENCE [LARGE SCALE GENOMIC DNA]</scope>
    <source>
        <strain>ATCC 49188 / DSM 6882 / CCUG 24695 / JCM 21032 / LMG 3331 / NBRC 15819 / NCTC 12168 / Alc 37</strain>
    </source>
</reference>
<gene>
    <name evidence="1" type="primary">dadA</name>
    <name type="ordered locus">Oant_1444</name>
</gene>
<keyword id="KW-0274">FAD</keyword>
<keyword id="KW-0285">Flavoprotein</keyword>
<keyword id="KW-0560">Oxidoreductase</keyword>
<keyword id="KW-1185">Reference proteome</keyword>
<accession>A6WYV7</accession>
<protein>
    <recommendedName>
        <fullName evidence="1">D-amino acid dehydrogenase</fullName>
        <ecNumber evidence="1">1.4.99.-</ecNumber>
    </recommendedName>
</protein>
<proteinExistence type="inferred from homology"/>
<name>DADA_BRUA4</name>
<dbReference type="EC" id="1.4.99.-" evidence="1"/>
<dbReference type="EMBL" id="CP000758">
    <property type="protein sequence ID" value="ABS14161.1"/>
    <property type="molecule type" value="Genomic_DNA"/>
</dbReference>
<dbReference type="RefSeq" id="WP_010659513.1">
    <property type="nucleotide sequence ID" value="NC_009667.1"/>
</dbReference>
<dbReference type="SMR" id="A6WYV7"/>
<dbReference type="STRING" id="439375.Oant_1444"/>
<dbReference type="KEGG" id="oan:Oant_1444"/>
<dbReference type="eggNOG" id="COG0665">
    <property type="taxonomic scope" value="Bacteria"/>
</dbReference>
<dbReference type="HOGENOM" id="CLU_007884_9_2_5"/>
<dbReference type="PhylomeDB" id="A6WYV7"/>
<dbReference type="UniPathway" id="UPA00043">
    <property type="reaction ID" value="UER00498"/>
</dbReference>
<dbReference type="Proteomes" id="UP000002301">
    <property type="component" value="Chromosome 1"/>
</dbReference>
<dbReference type="GO" id="GO:0005737">
    <property type="term" value="C:cytoplasm"/>
    <property type="evidence" value="ECO:0007669"/>
    <property type="project" value="TreeGrafter"/>
</dbReference>
<dbReference type="GO" id="GO:0005886">
    <property type="term" value="C:plasma membrane"/>
    <property type="evidence" value="ECO:0007669"/>
    <property type="project" value="TreeGrafter"/>
</dbReference>
<dbReference type="GO" id="GO:0008718">
    <property type="term" value="F:D-amino-acid dehydrogenase activity"/>
    <property type="evidence" value="ECO:0007669"/>
    <property type="project" value="UniProtKB-UniRule"/>
</dbReference>
<dbReference type="GO" id="GO:0055130">
    <property type="term" value="P:D-alanine catabolic process"/>
    <property type="evidence" value="ECO:0007669"/>
    <property type="project" value="UniProtKB-UniPathway"/>
</dbReference>
<dbReference type="FunFam" id="3.50.50.60:FF:000020">
    <property type="entry name" value="D-amino acid dehydrogenase"/>
    <property type="match status" value="1"/>
</dbReference>
<dbReference type="Gene3D" id="3.30.9.10">
    <property type="entry name" value="D-Amino Acid Oxidase, subunit A, domain 2"/>
    <property type="match status" value="1"/>
</dbReference>
<dbReference type="Gene3D" id="3.50.50.60">
    <property type="entry name" value="FAD/NAD(P)-binding domain"/>
    <property type="match status" value="2"/>
</dbReference>
<dbReference type="HAMAP" id="MF_01202">
    <property type="entry name" value="DadA"/>
    <property type="match status" value="1"/>
</dbReference>
<dbReference type="InterPro" id="IPR023080">
    <property type="entry name" value="DadA"/>
</dbReference>
<dbReference type="InterPro" id="IPR006076">
    <property type="entry name" value="FAD-dep_OxRdtase"/>
</dbReference>
<dbReference type="InterPro" id="IPR036188">
    <property type="entry name" value="FAD/NAD-bd_sf"/>
</dbReference>
<dbReference type="NCBIfam" id="NF001933">
    <property type="entry name" value="PRK00711.1"/>
    <property type="match status" value="1"/>
</dbReference>
<dbReference type="PANTHER" id="PTHR13847:SF280">
    <property type="entry name" value="D-AMINO ACID DEHYDROGENASE"/>
    <property type="match status" value="1"/>
</dbReference>
<dbReference type="PANTHER" id="PTHR13847">
    <property type="entry name" value="SARCOSINE DEHYDROGENASE-RELATED"/>
    <property type="match status" value="1"/>
</dbReference>
<dbReference type="Pfam" id="PF01266">
    <property type="entry name" value="DAO"/>
    <property type="match status" value="1"/>
</dbReference>
<dbReference type="SUPFAM" id="SSF54373">
    <property type="entry name" value="FAD-linked reductases, C-terminal domain"/>
    <property type="match status" value="1"/>
</dbReference>
<dbReference type="SUPFAM" id="SSF51905">
    <property type="entry name" value="FAD/NAD(P)-binding domain"/>
    <property type="match status" value="1"/>
</dbReference>
<evidence type="ECO:0000255" key="1">
    <source>
        <dbReference type="HAMAP-Rule" id="MF_01202"/>
    </source>
</evidence>
<comment type="function">
    <text evidence="1">Oxidative deamination of D-amino acids.</text>
</comment>
<comment type="catalytic activity">
    <reaction evidence="1">
        <text>a D-alpha-amino acid + A + H2O = a 2-oxocarboxylate + AH2 + NH4(+)</text>
        <dbReference type="Rhea" id="RHEA:18125"/>
        <dbReference type="ChEBI" id="CHEBI:13193"/>
        <dbReference type="ChEBI" id="CHEBI:15377"/>
        <dbReference type="ChEBI" id="CHEBI:17499"/>
        <dbReference type="ChEBI" id="CHEBI:28938"/>
        <dbReference type="ChEBI" id="CHEBI:35179"/>
        <dbReference type="ChEBI" id="CHEBI:59871"/>
    </reaction>
</comment>
<comment type="cofactor">
    <cofactor evidence="1">
        <name>FAD</name>
        <dbReference type="ChEBI" id="CHEBI:57692"/>
    </cofactor>
</comment>
<comment type="pathway">
    <text>Amino-acid degradation; D-alanine degradation; NH(3) and pyruvate from D-alanine: step 1/1.</text>
</comment>
<comment type="similarity">
    <text evidence="1">Belongs to the DadA oxidoreductase family.</text>
</comment>
<organism>
    <name type="scientific">Brucella anthropi (strain ATCC 49188 / DSM 6882 / CCUG 24695 / JCM 21032 / LMG 3331 / NBRC 15819 / NCTC 12168 / Alc 37)</name>
    <name type="common">Ochrobactrum anthropi</name>
    <dbReference type="NCBI Taxonomy" id="439375"/>
    <lineage>
        <taxon>Bacteria</taxon>
        <taxon>Pseudomonadati</taxon>
        <taxon>Pseudomonadota</taxon>
        <taxon>Alphaproteobacteria</taxon>
        <taxon>Hyphomicrobiales</taxon>
        <taxon>Brucellaceae</taxon>
        <taxon>Brucella/Ochrobactrum group</taxon>
        <taxon>Brucella</taxon>
    </lineage>
</organism>
<feature type="chain" id="PRO_1000066102" description="D-amino acid dehydrogenase">
    <location>
        <begin position="1"/>
        <end position="416"/>
    </location>
</feature>
<feature type="binding site" evidence="1">
    <location>
        <begin position="3"/>
        <end position="17"/>
    </location>
    <ligand>
        <name>FAD</name>
        <dbReference type="ChEBI" id="CHEBI:57692"/>
    </ligand>
</feature>
<sequence>MQITILGSGVIGVTTAYYLAKLGHEVTVVDREEGPALETSFANAGQVSPGYASPWAAPGIPFKAAKWLFQKHAPLVLRPTCDPVQYSWLLQMLANCTDSRYKVNKTRMVRVAEYARDCLVDLRKETGIEYDQRMQGTLQLFREQYQLDGIGKDIEVLRQDGVPFEVLDREGCAKVEPALARVKDKFVGGLRLPHDETGDCFKFTNALAKIAEGLGVKFRFGVNIKSLLMSGGKVSGVETSEGVLTADRYVVALGSYTPALVKSLGLNAPIYPVKGYSITAPIVDEDRAPVSTVLDESYKIAITRLGDRIRVGGMAEVSGFTTDLPAARRATLDLSVTDLFPGGDLKAATFWSGLRPMTPDSTPIIGATRYDNVFINAGHGTLGWTMSCGSGKLLADLISGNKPDIRADDLGISRYE</sequence>